<proteinExistence type="evidence at protein level"/>
<gene>
    <name type="primary">pcrB</name>
    <name type="ordered locus">Daro_2583</name>
</gene>
<name>PCRB_DECAR</name>
<protein>
    <recommendedName>
        <fullName>Perchlorate reductase subunit beta</fullName>
    </recommendedName>
    <alternativeName>
        <fullName>Perchlorate reductase iron-sulfur subunit</fullName>
    </alternativeName>
</protein>
<feature type="chain" id="PRO_0000422921" description="Perchlorate reductase subunit beta">
    <location>
        <begin position="1"/>
        <end position="333"/>
    </location>
</feature>
<feature type="domain" description="4Fe-4S ferredoxin-type 1" evidence="2">
    <location>
        <begin position="12"/>
        <end position="40"/>
    </location>
</feature>
<feature type="domain" description="4Fe-4S ferredoxin-type 2" evidence="2">
    <location>
        <begin position="128"/>
        <end position="159"/>
    </location>
</feature>
<feature type="domain" description="4Fe-4S ferredoxin-type 3" evidence="2">
    <location>
        <begin position="161"/>
        <end position="190"/>
    </location>
</feature>
<feature type="region of interest" description="Disordered" evidence="3">
    <location>
        <begin position="101"/>
        <end position="121"/>
    </location>
</feature>
<feature type="binding site" evidence="1">
    <location>
        <position position="21"/>
    </location>
    <ligand>
        <name>[4Fe-4S] cluster</name>
        <dbReference type="ChEBI" id="CHEBI:49883"/>
        <label>1</label>
    </ligand>
</feature>
<feature type="binding site" evidence="1">
    <location>
        <position position="24"/>
    </location>
    <ligand>
        <name>[4Fe-4S] cluster</name>
        <dbReference type="ChEBI" id="CHEBI:49883"/>
        <label>1</label>
    </ligand>
</feature>
<feature type="binding site" evidence="1">
    <location>
        <position position="27"/>
    </location>
    <ligand>
        <name>[4Fe-4S] cluster</name>
        <dbReference type="ChEBI" id="CHEBI:49883"/>
        <label>1</label>
    </ligand>
</feature>
<feature type="binding site" evidence="1">
    <location>
        <position position="31"/>
    </location>
    <ligand>
        <name>[4Fe-4S] cluster</name>
        <dbReference type="ChEBI" id="CHEBI:49883"/>
        <label>2</label>
    </ligand>
</feature>
<feature type="binding site" evidence="1">
    <location>
        <position position="137"/>
    </location>
    <ligand>
        <name>[4Fe-4S] cluster</name>
        <dbReference type="ChEBI" id="CHEBI:49883"/>
        <label>3</label>
    </ligand>
</feature>
<feature type="binding site" evidence="1">
    <location>
        <position position="140"/>
    </location>
    <ligand>
        <name>[4Fe-4S] cluster</name>
        <dbReference type="ChEBI" id="CHEBI:49883"/>
        <label>3</label>
    </ligand>
</feature>
<feature type="binding site" evidence="1">
    <location>
        <position position="145"/>
    </location>
    <ligand>
        <name>[4Fe-4S] cluster</name>
        <dbReference type="ChEBI" id="CHEBI:49883"/>
        <label>3</label>
    </ligand>
</feature>
<feature type="binding site" evidence="1">
    <location>
        <position position="149"/>
    </location>
    <ligand>
        <name>[3Fe-4S] cluster</name>
        <dbReference type="ChEBI" id="CHEBI:21137"/>
    </ligand>
</feature>
<feature type="binding site" evidence="1">
    <location>
        <position position="170"/>
    </location>
    <ligand>
        <name>[3Fe-4S] cluster</name>
        <dbReference type="ChEBI" id="CHEBI:21137"/>
    </ligand>
</feature>
<feature type="binding site" evidence="1">
    <location>
        <position position="176"/>
    </location>
    <ligand>
        <name>[3Fe-4S] cluster</name>
        <dbReference type="ChEBI" id="CHEBI:21137"/>
    </ligand>
</feature>
<feature type="binding site" evidence="1">
    <location>
        <position position="180"/>
    </location>
    <ligand>
        <name>[4Fe-4S] cluster</name>
        <dbReference type="ChEBI" id="CHEBI:49883"/>
        <label>3</label>
    </ligand>
</feature>
<feature type="binding site" evidence="1">
    <location>
        <position position="197"/>
    </location>
    <ligand>
        <name>[4Fe-4S] cluster</name>
        <dbReference type="ChEBI" id="CHEBI:49883"/>
        <label>2</label>
    </ligand>
</feature>
<feature type="binding site" evidence="1">
    <location>
        <position position="200"/>
    </location>
    <ligand>
        <name>[4Fe-4S] cluster</name>
        <dbReference type="ChEBI" id="CHEBI:49883"/>
        <label>2</label>
    </ligand>
</feature>
<feature type="binding site" evidence="1">
    <location>
        <position position="212"/>
    </location>
    <ligand>
        <name>[4Fe-4S] cluster</name>
        <dbReference type="ChEBI" id="CHEBI:49883"/>
        <label>2</label>
    </ligand>
</feature>
<feature type="binding site" evidence="1">
    <location>
        <position position="216"/>
    </location>
    <ligand>
        <name>[4Fe-4S] cluster</name>
        <dbReference type="ChEBI" id="CHEBI:49883"/>
        <label>1</label>
    </ligand>
</feature>
<accession>Q47CW7</accession>
<comment type="function">
    <text evidence="5">Component of the perchlorate reductase that catalyzes the reduction of perchlorate to chlorite and allows anaerobic growth on perchlorate as the sole electron acceptor. The beta subunit may be responsible for electron transfer to the catalytic alpha subunit PcrA (Probable).</text>
</comment>
<comment type="cofactor">
    <cofactor evidence="1">
        <name>[3Fe-4S] cluster</name>
        <dbReference type="ChEBI" id="CHEBI:21137"/>
    </cofactor>
    <text evidence="1">Binds 1 [3Fe-4S] cluster.</text>
</comment>
<comment type="cofactor">
    <cofactor evidence="1">
        <name>[4Fe-4S] cluster</name>
        <dbReference type="ChEBI" id="CHEBI:49883"/>
    </cofactor>
    <text evidence="1">Binds 3 [4Fe-4S] clusters.</text>
</comment>
<comment type="subunit">
    <text evidence="5">Heterotrimer of alpha, beta and gamma subunits.</text>
</comment>
<comment type="subcellular location">
    <subcellularLocation>
        <location evidence="5">Periplasm</location>
    </subcellularLocation>
    <text>Probably translocated together with PcrA, which possesses a Tat-type signal.</text>
</comment>
<comment type="biotechnology">
    <text evidence="4">Has potential use in bioremediation of waste sites contaminated with perchlorate, a common component of solid rocket fuel which is a widespread environmental contaminant in water systems in the United States.</text>
</comment>
<evidence type="ECO:0000250" key="1"/>
<evidence type="ECO:0000255" key="2">
    <source>
        <dbReference type="PROSITE-ProRule" id="PRU00711"/>
    </source>
</evidence>
<evidence type="ECO:0000256" key="3">
    <source>
        <dbReference type="SAM" id="MobiDB-lite"/>
    </source>
</evidence>
<evidence type="ECO:0000269" key="4">
    <source>
    </source>
</evidence>
<evidence type="ECO:0000305" key="5">
    <source>
    </source>
</evidence>
<organism>
    <name type="scientific">Dechloromonas aromatica (strain RCB)</name>
    <dbReference type="NCBI Taxonomy" id="159087"/>
    <lineage>
        <taxon>Bacteria</taxon>
        <taxon>Pseudomonadati</taxon>
        <taxon>Pseudomonadota</taxon>
        <taxon>Betaproteobacteria</taxon>
        <taxon>Rhodocyclales</taxon>
        <taxon>Azonexaceae</taxon>
        <taxon>Dechloromonas</taxon>
    </lineage>
</organism>
<reference key="1">
    <citation type="journal article" date="2009" name="BMC Genomics">
        <title>Metabolic analysis of the soil microbe Dechloromonas aromatica str. RCB: indications of a surprisingly complex life-style and cryptic anaerobic pathways for aromatic degradation.</title>
        <authorList>
            <person name="Salinero K.K."/>
            <person name="Keller K."/>
            <person name="Feil W.S."/>
            <person name="Feil H."/>
            <person name="Trong S."/>
            <person name="Di Bartolo G."/>
            <person name="Lapidus A."/>
        </authorList>
    </citation>
    <scope>NUCLEOTIDE SEQUENCE [LARGE SCALE GENOMIC DNA]</scope>
    <source>
        <strain>RCB</strain>
    </source>
</reference>
<reference key="2">
    <citation type="journal article" date="2005" name="J. Bacteriol.">
        <title>Identification, characterization, and classification of genes encoding perchlorate reductase.</title>
        <authorList>
            <person name="Bender K.S."/>
            <person name="Shang C."/>
            <person name="Chakraborty R."/>
            <person name="Belchik S.M."/>
            <person name="Coates J.D."/>
            <person name="Achenbach L.A."/>
        </authorList>
    </citation>
    <scope>IDENTIFICATION</scope>
    <scope>GENE NAME</scope>
    <scope>FUNCTION</scope>
    <scope>SUBCELLULAR LOCATION</scope>
    <scope>SUBUNIT</scope>
    <scope>BIOTECHNOLOGY</scope>
</reference>
<sequence>MANVMKAPKRQLTYVTDLNKCIGCQTCTVACKKLWTTGPGQDFMYWRNVETTPGLGYPRNWQTKGGGYKNGELQKGKIPPMIDYGIPFEFDYAGRLFEGKKERVRPSPTPRSAPNWDEDQGAGEYPNNSFFYLPRMCNHCTKPACLEACPNEAIYKREQDGIVVIHQDKCKGAQACVQSCPYAKPYFNPVANKANKCIGCFPRIEQGVAPGCVAQCVGRAMHVGFIDDTNSSVHKLIRLYKVALPLHPEFGTEPNVFYVPPVLGPRMELPNGELSTDPKIPLAQLEGLFGKQVRDVLAILQTEREKKMKGLASDLMDVLIGRRSADMMISPLT</sequence>
<dbReference type="EMBL" id="CP000089">
    <property type="protein sequence ID" value="AAZ47314.1"/>
    <property type="molecule type" value="Genomic_DNA"/>
</dbReference>
<dbReference type="SMR" id="Q47CW7"/>
<dbReference type="STRING" id="159087.Daro_2583"/>
<dbReference type="KEGG" id="dar:Daro_2583"/>
<dbReference type="eggNOG" id="COG1140">
    <property type="taxonomic scope" value="Bacteria"/>
</dbReference>
<dbReference type="HOGENOM" id="CLU_043374_5_2_4"/>
<dbReference type="OrthoDB" id="9779457at2"/>
<dbReference type="GO" id="GO:0016020">
    <property type="term" value="C:membrane"/>
    <property type="evidence" value="ECO:0007669"/>
    <property type="project" value="TreeGrafter"/>
</dbReference>
<dbReference type="GO" id="GO:0042597">
    <property type="term" value="C:periplasmic space"/>
    <property type="evidence" value="ECO:0007669"/>
    <property type="project" value="UniProtKB-SubCell"/>
</dbReference>
<dbReference type="GO" id="GO:0051538">
    <property type="term" value="F:3 iron, 4 sulfur cluster binding"/>
    <property type="evidence" value="ECO:0007669"/>
    <property type="project" value="UniProtKB-KW"/>
</dbReference>
<dbReference type="GO" id="GO:0051539">
    <property type="term" value="F:4 iron, 4 sulfur cluster binding"/>
    <property type="evidence" value="ECO:0007669"/>
    <property type="project" value="UniProtKB-KW"/>
</dbReference>
<dbReference type="GO" id="GO:0009055">
    <property type="term" value="F:electron transfer activity"/>
    <property type="evidence" value="ECO:0007669"/>
    <property type="project" value="TreeGrafter"/>
</dbReference>
<dbReference type="GO" id="GO:0046872">
    <property type="term" value="F:metal ion binding"/>
    <property type="evidence" value="ECO:0007669"/>
    <property type="project" value="UniProtKB-KW"/>
</dbReference>
<dbReference type="GO" id="GO:0009061">
    <property type="term" value="P:anaerobic respiration"/>
    <property type="evidence" value="ECO:0007669"/>
    <property type="project" value="InterPro"/>
</dbReference>
<dbReference type="CDD" id="cd10555">
    <property type="entry name" value="EBDH_beta"/>
    <property type="match status" value="1"/>
</dbReference>
<dbReference type="Gene3D" id="3.30.70.20">
    <property type="match status" value="3"/>
</dbReference>
<dbReference type="InterPro" id="IPR017896">
    <property type="entry name" value="4Fe4S_Fe-S-bd"/>
</dbReference>
<dbReference type="InterPro" id="IPR017839">
    <property type="entry name" value="DMSO_Rdtase_II_Fe-S_su"/>
</dbReference>
<dbReference type="NCBIfam" id="TIGR03478">
    <property type="entry name" value="DMSO_red_II_bet"/>
    <property type="match status" value="1"/>
</dbReference>
<dbReference type="PANTHER" id="PTHR43518">
    <property type="entry name" value="NITRATE REDUCTASE BETA SUBUNIT"/>
    <property type="match status" value="1"/>
</dbReference>
<dbReference type="PANTHER" id="PTHR43518:SF1">
    <property type="entry name" value="RESPIRATORY NITRATE REDUCTASE 1 BETA CHAIN"/>
    <property type="match status" value="1"/>
</dbReference>
<dbReference type="Pfam" id="PF13247">
    <property type="entry name" value="Fer4_11"/>
    <property type="match status" value="1"/>
</dbReference>
<dbReference type="SUPFAM" id="SSF54862">
    <property type="entry name" value="4Fe-4S ferredoxins"/>
    <property type="match status" value="1"/>
</dbReference>
<dbReference type="PROSITE" id="PS51379">
    <property type="entry name" value="4FE4S_FER_2"/>
    <property type="match status" value="3"/>
</dbReference>
<keyword id="KW-0003">3Fe-4S</keyword>
<keyword id="KW-0004">4Fe-4S</keyword>
<keyword id="KW-0249">Electron transport</keyword>
<keyword id="KW-0408">Iron</keyword>
<keyword id="KW-0411">Iron-sulfur</keyword>
<keyword id="KW-0479">Metal-binding</keyword>
<keyword id="KW-0574">Periplasm</keyword>
<keyword id="KW-0677">Repeat</keyword>
<keyword id="KW-0813">Transport</keyword>